<accession>Q46LG5</accession>
<proteinExistence type="inferred from homology"/>
<dbReference type="EMBL" id="CP000095">
    <property type="protein sequence ID" value="AAZ57663.1"/>
    <property type="molecule type" value="Genomic_DNA"/>
</dbReference>
<dbReference type="RefSeq" id="WP_011293705.1">
    <property type="nucleotide sequence ID" value="NC_007335.2"/>
</dbReference>
<dbReference type="SMR" id="Q46LG5"/>
<dbReference type="STRING" id="59920.PMN2A_0171"/>
<dbReference type="KEGG" id="pmn:PMN2A_0171"/>
<dbReference type="HOGENOM" id="CLU_049710_2_4_3"/>
<dbReference type="OrthoDB" id="9814290at2"/>
<dbReference type="PhylomeDB" id="Q46LG5"/>
<dbReference type="Proteomes" id="UP000002535">
    <property type="component" value="Chromosome"/>
</dbReference>
<dbReference type="GO" id="GO:0031676">
    <property type="term" value="C:plasma membrane-derived thylakoid membrane"/>
    <property type="evidence" value="ECO:0007669"/>
    <property type="project" value="UniProtKB-SubCell"/>
</dbReference>
<dbReference type="GO" id="GO:0020037">
    <property type="term" value="F:heme binding"/>
    <property type="evidence" value="ECO:0007669"/>
    <property type="project" value="InterPro"/>
</dbReference>
<dbReference type="GO" id="GO:0015232">
    <property type="term" value="F:heme transmembrane transporter activity"/>
    <property type="evidence" value="ECO:0007669"/>
    <property type="project" value="InterPro"/>
</dbReference>
<dbReference type="GO" id="GO:0017004">
    <property type="term" value="P:cytochrome complex assembly"/>
    <property type="evidence" value="ECO:0007669"/>
    <property type="project" value="UniProtKB-UniRule"/>
</dbReference>
<dbReference type="HAMAP" id="MF_01391">
    <property type="entry name" value="CytC_CcsA"/>
    <property type="match status" value="1"/>
</dbReference>
<dbReference type="InterPro" id="IPR002541">
    <property type="entry name" value="Cyt_c_assembly"/>
</dbReference>
<dbReference type="InterPro" id="IPR003557">
    <property type="entry name" value="Cyt_c_biogenesis_CcmC"/>
</dbReference>
<dbReference type="InterPro" id="IPR017562">
    <property type="entry name" value="Cyt_c_biogenesis_CcsA"/>
</dbReference>
<dbReference type="InterPro" id="IPR045062">
    <property type="entry name" value="Cyt_c_biogenesis_CcsA/CcmC"/>
</dbReference>
<dbReference type="NCBIfam" id="TIGR03144">
    <property type="entry name" value="cytochr_II_ccsB"/>
    <property type="match status" value="1"/>
</dbReference>
<dbReference type="PANTHER" id="PTHR30071:SF1">
    <property type="entry name" value="CYTOCHROME B_B6 PROTEIN-RELATED"/>
    <property type="match status" value="1"/>
</dbReference>
<dbReference type="PANTHER" id="PTHR30071">
    <property type="entry name" value="HEME EXPORTER PROTEIN C"/>
    <property type="match status" value="1"/>
</dbReference>
<dbReference type="Pfam" id="PF01578">
    <property type="entry name" value="Cytochrom_C_asm"/>
    <property type="match status" value="1"/>
</dbReference>
<dbReference type="PRINTS" id="PR01386">
    <property type="entry name" value="CCMCBIOGNSIS"/>
</dbReference>
<feature type="chain" id="PRO_5000100475" description="Cytochrome c biogenesis protein CcsA">
    <location>
        <begin position="1"/>
        <end position="315"/>
    </location>
</feature>
<feature type="transmembrane region" description="Helical" evidence="2">
    <location>
        <begin position="17"/>
        <end position="37"/>
    </location>
</feature>
<feature type="transmembrane region" description="Helical" evidence="2">
    <location>
        <begin position="72"/>
        <end position="92"/>
    </location>
</feature>
<feature type="transmembrane region" description="Helical" evidence="2">
    <location>
        <begin position="101"/>
        <end position="121"/>
    </location>
</feature>
<feature type="transmembrane region" description="Helical" evidence="2">
    <location>
        <begin position="146"/>
        <end position="166"/>
    </location>
</feature>
<feature type="transmembrane region" description="Helical" evidence="2">
    <location>
        <begin position="221"/>
        <end position="241"/>
    </location>
</feature>
<feature type="transmembrane region" description="Helical" evidence="2">
    <location>
        <begin position="255"/>
        <end position="272"/>
    </location>
</feature>
<feature type="transmembrane region" description="Helical" evidence="2">
    <location>
        <begin position="282"/>
        <end position="302"/>
    </location>
</feature>
<name>CCSA_PROMT</name>
<reference key="1">
    <citation type="journal article" date="2007" name="PLoS Genet.">
        <title>Patterns and implications of gene gain and loss in the evolution of Prochlorococcus.</title>
        <authorList>
            <person name="Kettler G.C."/>
            <person name="Martiny A.C."/>
            <person name="Huang K."/>
            <person name="Zucker J."/>
            <person name="Coleman M.L."/>
            <person name="Rodrigue S."/>
            <person name="Chen F."/>
            <person name="Lapidus A."/>
            <person name="Ferriera S."/>
            <person name="Johnson J."/>
            <person name="Steglich C."/>
            <person name="Church G.M."/>
            <person name="Richardson P."/>
            <person name="Chisholm S.W."/>
        </authorList>
    </citation>
    <scope>NUCLEOTIDE SEQUENCE [LARGE SCALE GENOMIC DNA]</scope>
    <source>
        <strain>NATL2A</strain>
    </source>
</reference>
<keyword id="KW-0201">Cytochrome c-type biogenesis</keyword>
<keyword id="KW-0472">Membrane</keyword>
<keyword id="KW-1185">Reference proteome</keyword>
<keyword id="KW-0793">Thylakoid</keyword>
<keyword id="KW-0812">Transmembrane</keyword>
<keyword id="KW-1133">Transmembrane helix</keyword>
<organism>
    <name type="scientific">Prochlorococcus marinus (strain NATL2A)</name>
    <dbReference type="NCBI Taxonomy" id="59920"/>
    <lineage>
        <taxon>Bacteria</taxon>
        <taxon>Bacillati</taxon>
        <taxon>Cyanobacteriota</taxon>
        <taxon>Cyanophyceae</taxon>
        <taxon>Synechococcales</taxon>
        <taxon>Prochlorococcaceae</taxon>
        <taxon>Prochlorococcus</taxon>
    </lineage>
</organism>
<protein>
    <recommendedName>
        <fullName evidence="2">Cytochrome c biogenesis protein CcsA</fullName>
    </recommendedName>
</protein>
<gene>
    <name evidence="2" type="primary">ccsA</name>
    <name type="ordered locus">PMN2A_0171</name>
</gene>
<evidence type="ECO:0000250" key="1"/>
<evidence type="ECO:0000255" key="2">
    <source>
        <dbReference type="HAMAP-Rule" id="MF_01391"/>
    </source>
</evidence>
<sequence length="315" mass="35049">MVDFQLNNFSFDPVVSLGFAAFLFLLMALPISFWAVAGSSDSSKARFLVAISNLFLTSQLILRWWQSGHFPISNLYESLCFLTWGCTLAQLFLERAWRSPIVSAVATPVSLLSIGFASFVLPENLQSSAPLVPALRSSWLVMHVSVIMCSYAALLIGSILSFGVFLVDGKKQFNIRNSSFGSGSFRQSSELYLDERNENLNSIQPIEFTNAEQLDSLSYRSITAGFLLLTVGLISGAVWANEAWGSWWSWDPKETWALICWLVYAAYLHTRITRGWQGKKPAILAIAGFFVIIVCYIGVNLLGVGLHSYGWFFDA</sequence>
<comment type="function">
    <text evidence="2">Required during biogenesis of c-type cytochromes (cytochrome c6 and cytochrome f) at the step of heme attachment.</text>
</comment>
<comment type="subunit">
    <text evidence="1">May interact with ccs1.</text>
</comment>
<comment type="subcellular location">
    <subcellularLocation>
        <location evidence="2">Cellular thylakoid membrane</location>
        <topology evidence="2">Multi-pass membrane protein</topology>
    </subcellularLocation>
</comment>
<comment type="similarity">
    <text evidence="2">Belongs to the CcmF/CycK/Ccl1/NrfE/CcsA family.</text>
</comment>